<reference key="1">
    <citation type="journal article" date="2004" name="Genome Res.">
        <title>The status, quality, and expansion of the NIH full-length cDNA project: the Mammalian Gene Collection (MGC).</title>
        <authorList>
            <consortium name="The MGC Project Team"/>
        </authorList>
    </citation>
    <scope>NUCLEOTIDE SEQUENCE [LARGE SCALE MRNA]</scope>
    <source>
        <strain>FVB/N</strain>
        <tissue>Colon</tissue>
    </source>
</reference>
<reference key="2">
    <citation type="journal article" date="2010" name="Cell">
        <title>A tissue-specific atlas of mouse protein phosphorylation and expression.</title>
        <authorList>
            <person name="Huttlin E.L."/>
            <person name="Jedrychowski M.P."/>
            <person name="Elias J.E."/>
            <person name="Goswami T."/>
            <person name="Rad R."/>
            <person name="Beausoleil S.A."/>
            <person name="Villen J."/>
            <person name="Haas W."/>
            <person name="Sowa M.E."/>
            <person name="Gygi S.P."/>
        </authorList>
    </citation>
    <scope>IDENTIFICATION BY MASS SPECTROMETRY [LARGE SCALE ANALYSIS]</scope>
    <source>
        <tissue>Brain</tissue>
    </source>
</reference>
<reference key="3">
    <citation type="journal article" date="2012" name="Traffic">
        <title>The BLOS1-interacting protein KXD1 is involved in the biogenesis of lysosome-related organelles.</title>
        <authorList>
            <person name="Yang Q."/>
            <person name="He X."/>
            <person name="Yang L."/>
            <person name="Zhou Z."/>
            <person name="Cullinane A.R."/>
            <person name="Wei A."/>
            <person name="Zhang Z."/>
            <person name="Hao Z."/>
            <person name="Zhang A."/>
            <person name="He M."/>
            <person name="Feng Y."/>
            <person name="Gao X."/>
            <person name="Gahl W.A."/>
            <person name="Huizing M."/>
            <person name="Li W."/>
        </authorList>
    </citation>
    <scope>FUNCTION</scope>
    <scope>ASSOCIATION WITH THE BLOC-1 COMPLEX</scope>
    <scope>INTERACTION WITH BLOC1S1 AND DTNBP1</scope>
    <scope>DISRUPTION PHENOTYPE</scope>
    <scope>TISSUE SPECIFICITY</scope>
</reference>
<gene>
    <name type="primary">Kxd1</name>
</gene>
<sequence length="177" mass="19977">MDTPDSASRVFCGRFLSMVNTDDVNAIILAQKNMLDRFEKTNEMLLNFNNLSSVRLQQMSERFMHHTRTLVDMKRDLDSIFRRIRTLKGKLARQHPEAFSHIPEGSFLEDEDEDPIPPSITTTIATSEQSTGSCDTSPDTVSPSLSPGFEDLSHIQPGSPAINGHRQTDDEEETHEE</sequence>
<protein>
    <recommendedName>
        <fullName>KxDL motif-containing protein 1</fullName>
    </recommendedName>
</protein>
<comment type="function">
    <text evidence="1 3">As part of the BORC complex may play a role in lysosomes movement and localization at the cell periphery. Associated with the cytosolic face of lysosomes, the BORC complex may recruit ARL8B and couple lysosomes to microtubule plus-end-directed kinesin motor (By similarity). May also be involved in the biogenesis of lysosome-related organelles such as melanosomes (PubMed:22554196).</text>
</comment>
<comment type="subunit">
    <text evidence="1 3">Component of the BLOC-one-related complex (BORC) which is composed of BLOC1S1, BLOC1S2, BORCS5, BORCS6, BORCS7, BORCS8, KXD1 and SNAPIN (By similarity). Associates with the BLOC-1 complex. Interacts with BLOC1S1. Interacts with DTNBP1/BLOC1S7 (via coiled-coil domain) (PubMed:22554196).</text>
</comment>
<comment type="subcellular location">
    <subcellularLocation>
        <location evidence="1">Lysosome membrane</location>
    </subcellularLocation>
</comment>
<comment type="tissue specificity">
    <text evidence="3">Widely expressed.</text>
</comment>
<comment type="disruption phenotype">
    <text evidence="3">Show defects in the lysosome-related organelles (LRO) biogenesis, mimicking mildly the human Hermansky-Pudlak syndrome (HPS).</text>
</comment>
<comment type="similarity">
    <text evidence="4">Belongs to the KXD1 family.</text>
</comment>
<name>KXDL1_MOUSE</name>
<accession>Q80XH1</accession>
<dbReference type="EMBL" id="BC048938">
    <property type="protein sequence ID" value="AAH48938.1"/>
    <property type="molecule type" value="mRNA"/>
</dbReference>
<dbReference type="CCDS" id="CCDS52574.1"/>
<dbReference type="RefSeq" id="NP_083642.1">
    <property type="nucleotide sequence ID" value="NM_029366.2"/>
</dbReference>
<dbReference type="SMR" id="Q80XH1"/>
<dbReference type="ComplexPortal" id="CPX-5061">
    <property type="entry name" value="BORC complex"/>
</dbReference>
<dbReference type="FunCoup" id="Q80XH1">
    <property type="interactions" value="280"/>
</dbReference>
<dbReference type="STRING" id="10090.ENSMUSP00000091165"/>
<dbReference type="GlyGen" id="Q80XH1">
    <property type="glycosylation" value="1 site, 1 N-linked glycan (1 site)"/>
</dbReference>
<dbReference type="iPTMnet" id="Q80XH1"/>
<dbReference type="PhosphoSitePlus" id="Q80XH1"/>
<dbReference type="PaxDb" id="10090-ENSMUSP00000091165"/>
<dbReference type="ProteomicsDB" id="264901"/>
<dbReference type="Pumba" id="Q80XH1"/>
<dbReference type="DNASU" id="75620"/>
<dbReference type="Ensembl" id="ENSMUST00000093456.12">
    <property type="protein sequence ID" value="ENSMUSP00000091165.6"/>
    <property type="gene ID" value="ENSMUSG00000055553.17"/>
</dbReference>
<dbReference type="GeneID" id="75620"/>
<dbReference type="KEGG" id="mmu:75620"/>
<dbReference type="UCSC" id="uc009man.2">
    <property type="organism name" value="mouse"/>
</dbReference>
<dbReference type="AGR" id="MGI:1922870"/>
<dbReference type="CTD" id="79036"/>
<dbReference type="MGI" id="MGI:1922870">
    <property type="gene designation" value="Kxd1"/>
</dbReference>
<dbReference type="VEuPathDB" id="HostDB:ENSMUSG00000055553"/>
<dbReference type="eggNOG" id="KOG3443">
    <property type="taxonomic scope" value="Eukaryota"/>
</dbReference>
<dbReference type="GeneTree" id="ENSGT00940000153593"/>
<dbReference type="HOGENOM" id="CLU_094353_3_0_1"/>
<dbReference type="InParanoid" id="Q80XH1"/>
<dbReference type="OrthoDB" id="44650at9989"/>
<dbReference type="TreeFam" id="TF319035"/>
<dbReference type="BioGRID-ORCS" id="75620">
    <property type="hits" value="5 hits in 60 CRISPR screens"/>
</dbReference>
<dbReference type="ChiTaRS" id="Kxd1">
    <property type="organism name" value="mouse"/>
</dbReference>
<dbReference type="PRO" id="PR:Q80XH1"/>
<dbReference type="Proteomes" id="UP000000589">
    <property type="component" value="Chromosome 8"/>
</dbReference>
<dbReference type="RNAct" id="Q80XH1">
    <property type="molecule type" value="protein"/>
</dbReference>
<dbReference type="Bgee" id="ENSMUSG00000055553">
    <property type="expression patterns" value="Expressed in blastoderm cell in morula and 223 other cell types or tissues"/>
</dbReference>
<dbReference type="ExpressionAtlas" id="Q80XH1">
    <property type="expression patterns" value="baseline and differential"/>
</dbReference>
<dbReference type="GO" id="GO:0099078">
    <property type="term" value="C:BORC complex"/>
    <property type="evidence" value="ECO:0000266"/>
    <property type="project" value="ComplexPortal"/>
</dbReference>
<dbReference type="GO" id="GO:0098574">
    <property type="term" value="C:cytoplasmic side of lysosomal membrane"/>
    <property type="evidence" value="ECO:0000303"/>
    <property type="project" value="ComplexPortal"/>
</dbReference>
<dbReference type="GO" id="GO:0032418">
    <property type="term" value="P:lysosome localization"/>
    <property type="evidence" value="ECO:0000250"/>
    <property type="project" value="UniProtKB"/>
</dbReference>
<dbReference type="GO" id="GO:0072384">
    <property type="term" value="P:organelle transport along microtubule"/>
    <property type="evidence" value="ECO:0000303"/>
    <property type="project" value="ComplexPortal"/>
</dbReference>
<dbReference type="GO" id="GO:0051036">
    <property type="term" value="P:regulation of endosome size"/>
    <property type="evidence" value="ECO:0000303"/>
    <property type="project" value="ComplexPortal"/>
</dbReference>
<dbReference type="GO" id="GO:0062196">
    <property type="term" value="P:regulation of lysosome size"/>
    <property type="evidence" value="ECO:0000303"/>
    <property type="project" value="ComplexPortal"/>
</dbReference>
<dbReference type="GO" id="GO:0016192">
    <property type="term" value="P:vesicle-mediated transport"/>
    <property type="evidence" value="ECO:0000315"/>
    <property type="project" value="UniProtKB"/>
</dbReference>
<dbReference type="InterPro" id="IPR039843">
    <property type="entry name" value="KXD1-like"/>
</dbReference>
<dbReference type="InterPro" id="IPR019371">
    <property type="entry name" value="KxDL_dom"/>
</dbReference>
<dbReference type="PANTHER" id="PTHR13511">
    <property type="entry name" value="KXDL MOTIF-CONTAINING PROTEIN 1"/>
    <property type="match status" value="1"/>
</dbReference>
<dbReference type="PANTHER" id="PTHR13511:SF0">
    <property type="entry name" value="KXDL MOTIF-CONTAINING PROTEIN 1"/>
    <property type="match status" value="1"/>
</dbReference>
<dbReference type="Pfam" id="PF10241">
    <property type="entry name" value="KxDL"/>
    <property type="match status" value="1"/>
</dbReference>
<proteinExistence type="evidence at protein level"/>
<organism>
    <name type="scientific">Mus musculus</name>
    <name type="common">Mouse</name>
    <dbReference type="NCBI Taxonomy" id="10090"/>
    <lineage>
        <taxon>Eukaryota</taxon>
        <taxon>Metazoa</taxon>
        <taxon>Chordata</taxon>
        <taxon>Craniata</taxon>
        <taxon>Vertebrata</taxon>
        <taxon>Euteleostomi</taxon>
        <taxon>Mammalia</taxon>
        <taxon>Eutheria</taxon>
        <taxon>Euarchontoglires</taxon>
        <taxon>Glires</taxon>
        <taxon>Rodentia</taxon>
        <taxon>Myomorpha</taxon>
        <taxon>Muroidea</taxon>
        <taxon>Muridae</taxon>
        <taxon>Murinae</taxon>
        <taxon>Mus</taxon>
        <taxon>Mus</taxon>
    </lineage>
</organism>
<evidence type="ECO:0000250" key="1">
    <source>
        <dbReference type="UniProtKB" id="Q9BQD3"/>
    </source>
</evidence>
<evidence type="ECO:0000256" key="2">
    <source>
        <dbReference type="SAM" id="MobiDB-lite"/>
    </source>
</evidence>
<evidence type="ECO:0000269" key="3">
    <source>
    </source>
</evidence>
<evidence type="ECO:0000305" key="4"/>
<keyword id="KW-0007">Acetylation</keyword>
<keyword id="KW-0458">Lysosome</keyword>
<keyword id="KW-0472">Membrane</keyword>
<keyword id="KW-1185">Reference proteome</keyword>
<feature type="chain" id="PRO_0000295260" description="KxDL motif-containing protein 1">
    <location>
        <begin position="1"/>
        <end position="177"/>
    </location>
</feature>
<feature type="region of interest" description="Disordered" evidence="2">
    <location>
        <begin position="100"/>
        <end position="177"/>
    </location>
</feature>
<feature type="compositionally biased region" description="Polar residues" evidence="2">
    <location>
        <begin position="125"/>
        <end position="145"/>
    </location>
</feature>
<feature type="modified residue" description="N-acetylmethionine" evidence="1">
    <location>
        <position position="1"/>
    </location>
</feature>